<protein>
    <recommendedName>
        <fullName>Zinc finger protein GLIS1</fullName>
    </recommendedName>
    <alternativeName>
        <fullName>GLI-similar 1</fullName>
    </alternativeName>
    <alternativeName>
        <fullName evidence="9">Gli homologous protein 1</fullName>
        <shortName evidence="9">GliH1</shortName>
    </alternativeName>
</protein>
<evidence type="ECO:0000250" key="1">
    <source>
        <dbReference type="UniProtKB" id="Q8NBF1"/>
    </source>
</evidence>
<evidence type="ECO:0000255" key="2"/>
<evidence type="ECO:0000255" key="3">
    <source>
        <dbReference type="PROSITE-ProRule" id="PRU00042"/>
    </source>
</evidence>
<evidence type="ECO:0000256" key="4">
    <source>
        <dbReference type="SAM" id="MobiDB-lite"/>
    </source>
</evidence>
<evidence type="ECO:0000269" key="5">
    <source>
    </source>
</evidence>
<evidence type="ECO:0000269" key="6">
    <source>
    </source>
</evidence>
<evidence type="ECO:0000269" key="7">
    <source>
    </source>
</evidence>
<evidence type="ECO:0000269" key="8">
    <source>
    </source>
</evidence>
<evidence type="ECO:0000303" key="9">
    <source>
    </source>
</evidence>
<evidence type="ECO:0000305" key="10"/>
<evidence type="ECO:0000312" key="11">
    <source>
        <dbReference type="EMBL" id="AAH66157.1"/>
    </source>
</evidence>
<evidence type="ECO:0000312" key="12">
    <source>
        <dbReference type="EMBL" id="AAM12150.1"/>
    </source>
</evidence>
<evidence type="ECO:0000312" key="13">
    <source>
        <dbReference type="EMBL" id="AAM93156.1"/>
    </source>
</evidence>
<evidence type="ECO:0000312" key="14">
    <source>
        <dbReference type="MGI" id="MGI:2386723"/>
    </source>
</evidence>
<feature type="chain" id="PRO_0000047210" description="Zinc finger protein GLIS1">
    <location>
        <begin position="1"/>
        <end position="789"/>
    </location>
</feature>
<feature type="zinc finger region" description="C2H2-type 1" evidence="3">
    <location>
        <begin position="366"/>
        <end position="391"/>
    </location>
</feature>
<feature type="zinc finger region" description="C2H2-type 2; atypical" evidence="3">
    <location>
        <begin position="400"/>
        <end position="427"/>
    </location>
</feature>
<feature type="zinc finger region" description="C2H2-type 3" evidence="3">
    <location>
        <begin position="433"/>
        <end position="457"/>
    </location>
</feature>
<feature type="zinc finger region" description="C2H2-type 4" evidence="3">
    <location>
        <begin position="463"/>
        <end position="487"/>
    </location>
</feature>
<feature type="zinc finger region" description="C2H2-type 5" evidence="3">
    <location>
        <begin position="493"/>
        <end position="517"/>
    </location>
</feature>
<feature type="region of interest" description="Disordered" evidence="4">
    <location>
        <begin position="1"/>
        <end position="29"/>
    </location>
</feature>
<feature type="region of interest" description="Disordered" evidence="4">
    <location>
        <begin position="53"/>
        <end position="93"/>
    </location>
</feature>
<feature type="region of interest" description="Disordered" evidence="4">
    <location>
        <begin position="278"/>
        <end position="304"/>
    </location>
</feature>
<feature type="region of interest" description="Disordered" evidence="4">
    <location>
        <begin position="506"/>
        <end position="529"/>
    </location>
</feature>
<feature type="region of interest" description="Disordered" evidence="4">
    <location>
        <begin position="573"/>
        <end position="684"/>
    </location>
</feature>
<feature type="short sequence motif" description="Bipartite nuclear localization signal" evidence="2">
    <location>
        <begin position="511"/>
        <end position="527"/>
    </location>
</feature>
<feature type="compositionally biased region" description="Basic and acidic residues" evidence="4">
    <location>
        <begin position="1"/>
        <end position="16"/>
    </location>
</feature>
<feature type="compositionally biased region" description="Basic and acidic residues" evidence="4">
    <location>
        <begin position="63"/>
        <end position="74"/>
    </location>
</feature>
<feature type="compositionally biased region" description="Polar residues" evidence="4">
    <location>
        <begin position="80"/>
        <end position="92"/>
    </location>
</feature>
<feature type="compositionally biased region" description="Low complexity" evidence="4">
    <location>
        <begin position="648"/>
        <end position="658"/>
    </location>
</feature>
<feature type="splice variant" id="VSP_051623" description="In isoform 2." evidence="9">
    <location>
        <begin position="1"/>
        <end position="171"/>
    </location>
</feature>
<feature type="sequence conflict" description="In Ref. 1; AAM93156." evidence="10" ref="1">
    <original>V</original>
    <variation>A</variation>
    <location>
        <position position="173"/>
    </location>
</feature>
<feature type="sequence conflict" description="In Ref. 1; AAM93156." evidence="10" ref="1">
    <original>G</original>
    <variation>R</variation>
    <location>
        <position position="354"/>
    </location>
</feature>
<feature type="sequence conflict" description="In Ref. 3; AAH66157." evidence="10" ref="3">
    <original>E</original>
    <variation>G</variation>
    <location>
        <position position="378"/>
    </location>
</feature>
<feature type="sequence conflict" description="In Ref. 3; AAH66157." evidence="10" ref="3">
    <original>V</original>
    <variation>E</variation>
    <location>
        <position position="384"/>
    </location>
</feature>
<feature type="sequence conflict" description="In Ref. 1; AAM93156." evidence="10" ref="1">
    <original>Q</original>
    <variation>R</variation>
    <location>
        <position position="466"/>
    </location>
</feature>
<feature type="sequence conflict" description="In Ref. 3; AAH66157." evidence="10" ref="3">
    <original>V</original>
    <variation>A</variation>
    <location>
        <position position="634"/>
    </location>
</feature>
<feature type="sequence conflict" description="In Ref. 3; AAH66157." evidence="10" ref="3">
    <original>Y</original>
    <variation>S</variation>
    <location>
        <position position="668"/>
    </location>
</feature>
<keyword id="KW-0010">Activator</keyword>
<keyword id="KW-0025">Alternative splicing</keyword>
<keyword id="KW-0221">Differentiation</keyword>
<keyword id="KW-0238">DNA-binding</keyword>
<keyword id="KW-0479">Metal-binding</keyword>
<keyword id="KW-0539">Nucleus</keyword>
<keyword id="KW-1185">Reference proteome</keyword>
<keyword id="KW-0677">Repeat</keyword>
<keyword id="KW-0678">Repressor</keyword>
<keyword id="KW-0804">Transcription</keyword>
<keyword id="KW-0805">Transcription regulation</keyword>
<keyword id="KW-0862">Zinc</keyword>
<keyword id="KW-0863">Zinc-finger</keyword>
<comment type="function">
    <text evidence="5 6 7 8">Acts both as a repressor and an ctivator of transcription (PubMed:12042312, PubMed:12385751, PubMed:21654807). Binds to the consensus sequence 5'-GACCACCCAC-3' (PubMed:12042312). By controlling the expression of genes involved in cell differentiation inhibits the lineage commitment of multipotent cells (PubMed:21654807, PubMed:30544251). Prevents, for instance, the differentiation of multipotent mesenchymal cells into adipocyte and osteoblast (PubMed:30544251).</text>
</comment>
<comment type="subunit">
    <text evidence="1">Interacts with KLF4. Interacts with POU5F1 and/or POU5F1B. Interacts with SOX2.</text>
</comment>
<comment type="subcellular location">
    <subcellularLocation>
        <location evidence="5">Nucleus</location>
    </subcellularLocation>
</comment>
<comment type="alternative products">
    <event type="alternative splicing"/>
    <isoform>
        <id>Q8K1M4-1</id>
        <name evidence="5">1</name>
        <sequence type="displayed"/>
    </isoform>
    <isoform>
        <id>Q8K1M4-2</id>
        <name evidence="6">2</name>
        <sequence type="described" ref="VSP_051623"/>
    </isoform>
</comment>
<comment type="tissue specificity">
    <text evidence="5 6">In the adult, expressed highly in placenta and kidney and at lower levels in the testis, brain, colon, brown fat tissue and thymus. During embryo development, expressed in the frontal nasal region, branchial arches, somites, vibrissal and hair follicles, limb buds, craniofacial regions, ventral part of the tail, intervertebral disks, teeth, eyes and kidney.</text>
</comment>
<comment type="developmental stage">
    <text evidence="5 6 7">Higher expression is detected in unfertilized eggs and one-cell embryos compared to two-cells embryos and adult tissues (PubMed:21654807). In the embryo, expression is detected at 10 dpc becoming stronger by 11 dpc and continuing through to 16.5 dpc.</text>
</comment>
<comment type="disruption phenotype">
    <text evidence="6">No visible phenotype.</text>
</comment>
<comment type="biotechnology">
    <text evidence="7">The combined transgenic expression of the OSK transcription factors POU5F1/OCT4, SOX2 and KLF4, reprograms differentiated cells into induced pluripotent stem cells/iSPCs. iPSCs exhibit the morphology and properties of embryonic stem/ES cells. The coexpression of GLIS1 can increase the efficiency of OSK-induced pluripotent stem cells/iPSCs production.</text>
</comment>
<comment type="similarity">
    <text evidence="10">Belongs to the GLI C2H2-type zinc-finger protein family.</text>
</comment>
<comment type="sequence caution" evidence="10">
    <conflict type="erroneous initiation">
        <sequence resource="EMBL-CDS" id="AAH66157"/>
    </conflict>
</comment>
<organism>
    <name type="scientific">Mus musculus</name>
    <name type="common">Mouse</name>
    <dbReference type="NCBI Taxonomy" id="10090"/>
    <lineage>
        <taxon>Eukaryota</taxon>
        <taxon>Metazoa</taxon>
        <taxon>Chordata</taxon>
        <taxon>Craniata</taxon>
        <taxon>Vertebrata</taxon>
        <taxon>Euteleostomi</taxon>
        <taxon>Mammalia</taxon>
        <taxon>Eutheria</taxon>
        <taxon>Euarchontoglires</taxon>
        <taxon>Glires</taxon>
        <taxon>Rodentia</taxon>
        <taxon>Myomorpha</taxon>
        <taxon>Muroidea</taxon>
        <taxon>Muridae</taxon>
        <taxon>Murinae</taxon>
        <taxon>Mus</taxon>
        <taxon>Mus</taxon>
    </lineage>
</organism>
<reference evidence="10 13" key="1">
    <citation type="journal article" date="2002" name="J. Biol. Chem.">
        <title>Identification of Glis1, a novel Gli-related, Kruppel-like zinc finger protein containing transactivation and repressor functions.</title>
        <authorList>
            <person name="Kim Y.-S."/>
            <person name="Lewandoski M."/>
            <person name="Perantoni A.O."/>
            <person name="Kurebayashi S."/>
            <person name="Nakanishi G."/>
            <person name="Jetten A.M."/>
        </authorList>
    </citation>
    <scope>NUCLEOTIDE SEQUENCE [MRNA] (ISOFORM 1)</scope>
    <scope>FUNCTION</scope>
    <scope>SUBCELLULAR LOCATION</scope>
    <scope>TISSUE SPECIFICITY</scope>
    <scope>DEVELOPMENTAL STAGE</scope>
    <source>
        <strain evidence="13">BALB/cJ</strain>
        <tissue evidence="5">Kidney</tissue>
    </source>
</reference>
<reference evidence="10 12" key="2">
    <citation type="journal article" date="2002" name="Mech. Dev.">
        <title>A novel gene, GliH1, with homology to the Gli zinc finger domain not required for mouse development.</title>
        <authorList>
            <person name="Nakashima M."/>
            <person name="Tanese N."/>
            <person name="Ito M."/>
            <person name="Auerbach W."/>
            <person name="Bai C."/>
            <person name="Furukawa T."/>
            <person name="Toyono T."/>
            <person name="Akamine A."/>
            <person name="Joyner A.L."/>
        </authorList>
    </citation>
    <scope>NUCLEOTIDE SEQUENCE [MRNA] (ISOFORM 2)</scope>
    <scope>FUNCTION</scope>
    <scope>TISSUE SPECIFICITY</scope>
    <scope>DEVELOPMENTAL STAGE</scope>
    <scope>DISRUPTION PHENOTYPE</scope>
</reference>
<reference evidence="10 11" key="3">
    <citation type="journal article" date="2004" name="Genome Res.">
        <title>The status, quality, and expansion of the NIH full-length cDNA project: the Mammalian Gene Collection (MGC).</title>
        <authorList>
            <consortium name="The MGC Project Team"/>
        </authorList>
    </citation>
    <scope>NUCLEOTIDE SEQUENCE [LARGE SCALE MRNA] OF 116-789 (ISOFORM 1)</scope>
    <source>
        <strain evidence="11">C57BL/6J</strain>
        <tissue evidence="11">Kidney</tissue>
    </source>
</reference>
<reference key="4">
    <citation type="journal article" date="2011" name="Nature">
        <title>Direct reprogramming of somatic cells is promoted by maternal transcription factor Glis1.</title>
        <authorList>
            <person name="Maekawa M."/>
            <person name="Yamaguchi K."/>
            <person name="Nakamura T."/>
            <person name="Shibukawa R."/>
            <person name="Kodanaka I."/>
            <person name="Ichisaka T."/>
            <person name="Kawamura Y."/>
            <person name="Mochizuki H."/>
            <person name="Goshima N."/>
            <person name="Yamanaka S."/>
        </authorList>
    </citation>
    <scope>FUNCTION</scope>
    <scope>DEVELOPMENTAL STAGE</scope>
    <scope>BIOTECHNOLOGY</scope>
</reference>
<reference key="5">
    <citation type="journal article" date="2019" name="Nucleic Acids Res.">
        <title>Temporal enhancer profiling of parallel lineages identifies AHR and GLIS1 as regulators of mesenchymal multipotency.</title>
        <authorList>
            <person name="Gerard D."/>
            <person name="Schmidt F."/>
            <person name="Ginolhac A."/>
            <person name="Schmitz M."/>
            <person name="Halder R."/>
            <person name="Ebert P."/>
            <person name="Schulz M.H."/>
            <person name="Sauter T."/>
            <person name="Sinkkonen L."/>
        </authorList>
    </citation>
    <scope>FUNCTION</scope>
</reference>
<sequence>MHCEVAEALSDKRPKEAPGAPGQGRGPVSLGAHMAFRIAVSGGGCGDGNPLDLLPRLPVPPPRAHDLLRPRSPRDYGVSKTGSGKVNGSYGHSSEKSLLDLDLAEGPSPSCHQGLFLPAGTPPPRGHPPVCEKLLHFPHPNRSPRPQATFVNGSLPAAQHIKQEALPDYQAMVSAHTPLPTHCRAPSSMGLPSDLDFPDRGLTNPAPSCYLLGNEPISDLGPQPEAHLPEGSLKRCCLLGLPPTSSASSSPCASSDINPVIHSSQTALVSCVNGLRSPPLPGDLGGPPKRSRPGPASSDGQEGSLQLEACRKSGFLKQEPMDEFSELFAPHHQGLPPPYPLPQLPTGPGLGGLGLGLAGRMVAGRQACRWVDCCAAYEQQEELVRHIEKSHIDQRKGEDFTCFWAGCVRRYKPFNARYKLLIHMRVHSGEKPNKCMFEGCSKAFSRLENLKIHLRSHTGEKPYLCQHPGCQKAFSNSSDRAKHQRTHLDTKPYACQIPGCSKRYTDPSSLRKHVKAHSAKEQQVRKKLHTGADPEADVLSECLSLQQLQASTLLPASRGKGSQTLSQELLPGVYPGSVTPQNGLASGILSPSHDVPSRHHPLEVPTGSHHHLSPLPTAESTRDGLGPSLLSPMVSPLKGLGPPPLPPASQSQSPGGQSFSTVPSKPTYPSFQSPPPLPSPQGYQGSFHSIQNCFPYADCYRATEPAASRDGLVGDAHGFNPLRPSTYSSLSTPLSAPGYETLAETPCPPALQPQPAEDLVPSGPEDCGFFPNGAFDHCLSHIPSIYTDT</sequence>
<name>GLIS1_MOUSE</name>
<proteinExistence type="evidence at protein level"/>
<accession>Q8K1M4</accession>
<accession>Q6NZF6</accession>
<accession>Q8R4Z3</accession>
<dbReference type="EMBL" id="AF486579">
    <property type="protein sequence ID" value="AAM93156.1"/>
    <property type="molecule type" value="mRNA"/>
</dbReference>
<dbReference type="EMBL" id="AF220434">
    <property type="protein sequence ID" value="AAM12150.1"/>
    <property type="molecule type" value="mRNA"/>
</dbReference>
<dbReference type="EMBL" id="BC066157">
    <property type="protein sequence ID" value="AAH66157.1"/>
    <property type="status" value="ALT_INIT"/>
    <property type="molecule type" value="mRNA"/>
</dbReference>
<dbReference type="CCDS" id="CCDS38831.1">
    <molecule id="Q8K1M4-1"/>
</dbReference>
<dbReference type="RefSeq" id="NP_671754.2">
    <molecule id="Q8K1M4-1"/>
    <property type="nucleotide sequence ID" value="NM_147221.2"/>
</dbReference>
<dbReference type="RefSeq" id="XP_006503036.1">
    <molecule id="Q8K1M4-1"/>
    <property type="nucleotide sequence ID" value="XM_006502973.5"/>
</dbReference>
<dbReference type="RefSeq" id="XP_006503037.1">
    <molecule id="Q8K1M4-1"/>
    <property type="nucleotide sequence ID" value="XM_006502974.5"/>
</dbReference>
<dbReference type="RefSeq" id="XP_006503038.1">
    <molecule id="Q8K1M4-1"/>
    <property type="nucleotide sequence ID" value="XM_006502975.2"/>
</dbReference>
<dbReference type="SMR" id="Q8K1M4"/>
<dbReference type="BioGRID" id="230975">
    <property type="interactions" value="16"/>
</dbReference>
<dbReference type="FunCoup" id="Q8K1M4">
    <property type="interactions" value="959"/>
</dbReference>
<dbReference type="STRING" id="10090.ENSMUSP00000035650"/>
<dbReference type="iPTMnet" id="Q8K1M4"/>
<dbReference type="PhosphoSitePlus" id="Q8K1M4"/>
<dbReference type="SwissPalm" id="Q8K1M4"/>
<dbReference type="PaxDb" id="10090-ENSMUSP00000035650"/>
<dbReference type="ProteomicsDB" id="267451">
    <molecule id="Q8K1M4-1"/>
</dbReference>
<dbReference type="ProteomicsDB" id="267452">
    <molecule id="Q8K1M4-2"/>
</dbReference>
<dbReference type="Antibodypedia" id="748">
    <property type="antibodies" value="121 antibodies from 28 providers"/>
</dbReference>
<dbReference type="DNASU" id="230587"/>
<dbReference type="Ensembl" id="ENSMUST00000046005.9">
    <molecule id="Q8K1M4-1"/>
    <property type="protein sequence ID" value="ENSMUSP00000035650.3"/>
    <property type="gene ID" value="ENSMUSG00000034762.10"/>
</dbReference>
<dbReference type="GeneID" id="230587"/>
<dbReference type="KEGG" id="mmu:230587"/>
<dbReference type="UCSC" id="uc008tzv.1">
    <molecule id="Q8K1M4-1"/>
    <property type="organism name" value="mouse"/>
</dbReference>
<dbReference type="AGR" id="MGI:2386723"/>
<dbReference type="CTD" id="148979"/>
<dbReference type="MGI" id="MGI:2386723">
    <property type="gene designation" value="Glis1"/>
</dbReference>
<dbReference type="VEuPathDB" id="HostDB:ENSMUSG00000034762"/>
<dbReference type="eggNOG" id="KOG1721">
    <property type="taxonomic scope" value="Eukaryota"/>
</dbReference>
<dbReference type="GeneTree" id="ENSGT00940000159218"/>
<dbReference type="InParanoid" id="Q8K1M4"/>
<dbReference type="OMA" id="ECPSDYK"/>
<dbReference type="OrthoDB" id="3214149at2759"/>
<dbReference type="PhylomeDB" id="Q8K1M4"/>
<dbReference type="TreeFam" id="TF350216"/>
<dbReference type="BioGRID-ORCS" id="230587">
    <property type="hits" value="3 hits in 80 CRISPR screens"/>
</dbReference>
<dbReference type="ChiTaRS" id="Glis1">
    <property type="organism name" value="mouse"/>
</dbReference>
<dbReference type="PRO" id="PR:Q8K1M4"/>
<dbReference type="Proteomes" id="UP000000589">
    <property type="component" value="Chromosome 4"/>
</dbReference>
<dbReference type="RNAct" id="Q8K1M4">
    <property type="molecule type" value="protein"/>
</dbReference>
<dbReference type="Bgee" id="ENSMUSG00000034762">
    <property type="expression patterns" value="Expressed in animal zygote and 113 other cell types or tissues"/>
</dbReference>
<dbReference type="ExpressionAtlas" id="Q8K1M4">
    <property type="expression patterns" value="baseline and differential"/>
</dbReference>
<dbReference type="GO" id="GO:0005634">
    <property type="term" value="C:nucleus"/>
    <property type="evidence" value="ECO:0000314"/>
    <property type="project" value="MGI"/>
</dbReference>
<dbReference type="GO" id="GO:0003677">
    <property type="term" value="F:DNA binding"/>
    <property type="evidence" value="ECO:0000314"/>
    <property type="project" value="MGI"/>
</dbReference>
<dbReference type="GO" id="GO:0001228">
    <property type="term" value="F:DNA-binding transcription activator activity, RNA polymerase II-specific"/>
    <property type="evidence" value="ECO:0000314"/>
    <property type="project" value="NTNU_SB"/>
</dbReference>
<dbReference type="GO" id="GO:0001227">
    <property type="term" value="F:DNA-binding transcription repressor activity, RNA polymerase II-specific"/>
    <property type="evidence" value="ECO:0000314"/>
    <property type="project" value="NTNU_SB"/>
</dbReference>
<dbReference type="GO" id="GO:0000977">
    <property type="term" value="F:RNA polymerase II transcription regulatory region sequence-specific DNA binding"/>
    <property type="evidence" value="ECO:0000314"/>
    <property type="project" value="NTNU_SB"/>
</dbReference>
<dbReference type="GO" id="GO:0008270">
    <property type="term" value="F:zinc ion binding"/>
    <property type="evidence" value="ECO:0007669"/>
    <property type="project" value="UniProtKB-KW"/>
</dbReference>
<dbReference type="GO" id="GO:0045444">
    <property type="term" value="P:fat cell differentiation"/>
    <property type="evidence" value="ECO:0000315"/>
    <property type="project" value="UniProtKB"/>
</dbReference>
<dbReference type="GO" id="GO:0010454">
    <property type="term" value="P:negative regulation of cell fate commitment"/>
    <property type="evidence" value="ECO:0000315"/>
    <property type="project" value="UniProtKB"/>
</dbReference>
<dbReference type="GO" id="GO:0000122">
    <property type="term" value="P:negative regulation of transcription by RNA polymerase II"/>
    <property type="evidence" value="ECO:0000314"/>
    <property type="project" value="NTNU_SB"/>
</dbReference>
<dbReference type="GO" id="GO:0001649">
    <property type="term" value="P:osteoblast differentiation"/>
    <property type="evidence" value="ECO:0000315"/>
    <property type="project" value="UniProtKB"/>
</dbReference>
<dbReference type="GO" id="GO:0045893">
    <property type="term" value="P:positive regulation of DNA-templated transcription"/>
    <property type="evidence" value="ECO:0000314"/>
    <property type="project" value="MGI"/>
</dbReference>
<dbReference type="GO" id="GO:0045944">
    <property type="term" value="P:positive regulation of transcription by RNA polymerase II"/>
    <property type="evidence" value="ECO:0000314"/>
    <property type="project" value="UniProtKB"/>
</dbReference>
<dbReference type="GO" id="GO:0006357">
    <property type="term" value="P:regulation of transcription by RNA polymerase II"/>
    <property type="evidence" value="ECO:0000314"/>
    <property type="project" value="MGI"/>
</dbReference>
<dbReference type="FunFam" id="3.30.160.60:FF:000019">
    <property type="entry name" value="GLI family zinc finger 3"/>
    <property type="match status" value="1"/>
</dbReference>
<dbReference type="FunFam" id="3.30.160.60:FF:000031">
    <property type="entry name" value="GLI family zinc finger 3"/>
    <property type="match status" value="1"/>
</dbReference>
<dbReference type="FunFam" id="3.30.160.60:FF:000036">
    <property type="entry name" value="GLI family zinc finger 3"/>
    <property type="match status" value="1"/>
</dbReference>
<dbReference type="FunFam" id="3.30.160.60:FF:000048">
    <property type="entry name" value="GLI family zinc finger 3"/>
    <property type="match status" value="1"/>
</dbReference>
<dbReference type="FunFam" id="3.30.160.60:FF:000453">
    <property type="entry name" value="GLIS family zinc finger 3"/>
    <property type="match status" value="1"/>
</dbReference>
<dbReference type="Gene3D" id="3.30.160.60">
    <property type="entry name" value="Classic Zinc Finger"/>
    <property type="match status" value="5"/>
</dbReference>
<dbReference type="InterPro" id="IPR043359">
    <property type="entry name" value="GLI-like"/>
</dbReference>
<dbReference type="InterPro" id="IPR056436">
    <property type="entry name" value="Znf-C2H2_ZIC1-5/GLI1-3-like"/>
</dbReference>
<dbReference type="InterPro" id="IPR036236">
    <property type="entry name" value="Znf_C2H2_sf"/>
</dbReference>
<dbReference type="InterPro" id="IPR013087">
    <property type="entry name" value="Znf_C2H2_type"/>
</dbReference>
<dbReference type="PANTHER" id="PTHR45718">
    <property type="entry name" value="TRANSCRIPTIONAL ACTIVATOR CUBITUS INTERRUPTUS"/>
    <property type="match status" value="1"/>
</dbReference>
<dbReference type="PANTHER" id="PTHR45718:SF3">
    <property type="entry name" value="ZINC FINGER PROTEIN GLIS1"/>
    <property type="match status" value="1"/>
</dbReference>
<dbReference type="Pfam" id="PF00096">
    <property type="entry name" value="zf-C2H2"/>
    <property type="match status" value="3"/>
</dbReference>
<dbReference type="Pfam" id="PF23561">
    <property type="entry name" value="zf-C2H2_15"/>
    <property type="match status" value="1"/>
</dbReference>
<dbReference type="SMART" id="SM00355">
    <property type="entry name" value="ZnF_C2H2"/>
    <property type="match status" value="5"/>
</dbReference>
<dbReference type="SUPFAM" id="SSF57667">
    <property type="entry name" value="beta-beta-alpha zinc fingers"/>
    <property type="match status" value="3"/>
</dbReference>
<dbReference type="PROSITE" id="PS00028">
    <property type="entry name" value="ZINC_FINGER_C2H2_1"/>
    <property type="match status" value="4"/>
</dbReference>
<dbReference type="PROSITE" id="PS50157">
    <property type="entry name" value="ZINC_FINGER_C2H2_2"/>
    <property type="match status" value="4"/>
</dbReference>
<gene>
    <name evidence="14" type="primary">Glis1</name>
    <name type="synonym">Gli5</name>
</gene>